<sequence>MPFLELTLSCSEVTLPRFQNALDDVGALAVTMLDADADTSNERAILEPGVGEMPLWDRLTMTALFDGDSDALVVLAALEAFDPGLDWSQVAFRMVEDSDWERAWMDLFKPMQFGERTFIVPWNHALPEAADTPEAAVVRLDPGLAFGSGTHQTTALCLRWLDSLAGSGELQGRSVLDFGCGSGILAVAALKLGAAGAVGVDNDPQALLATADNAQRNGVDAQLTVYMPQDEPVQTYQVVVANILASALDALADTLAARVAPGGRIALSGILHGQEDDLLKRYAPWFDQLRCERDEDWMRIDGVRRG</sequence>
<feature type="chain" id="PRO_1000046122" description="Ribosomal protein L11 methyltransferase">
    <location>
        <begin position="1"/>
        <end position="306"/>
    </location>
</feature>
<feature type="binding site" evidence="1">
    <location>
        <position position="154"/>
    </location>
    <ligand>
        <name>S-adenosyl-L-methionine</name>
        <dbReference type="ChEBI" id="CHEBI:59789"/>
    </ligand>
</feature>
<feature type="binding site" evidence="1">
    <location>
        <position position="179"/>
    </location>
    <ligand>
        <name>S-adenosyl-L-methionine</name>
        <dbReference type="ChEBI" id="CHEBI:59789"/>
    </ligand>
</feature>
<feature type="binding site" evidence="1">
    <location>
        <position position="201"/>
    </location>
    <ligand>
        <name>S-adenosyl-L-methionine</name>
        <dbReference type="ChEBI" id="CHEBI:59789"/>
    </ligand>
</feature>
<feature type="binding site" evidence="1">
    <location>
        <position position="242"/>
    </location>
    <ligand>
        <name>S-adenosyl-L-methionine</name>
        <dbReference type="ChEBI" id="CHEBI:59789"/>
    </ligand>
</feature>
<keyword id="KW-0963">Cytoplasm</keyword>
<keyword id="KW-0489">Methyltransferase</keyword>
<keyword id="KW-0949">S-adenosyl-L-methionine</keyword>
<keyword id="KW-0808">Transferase</keyword>
<protein>
    <recommendedName>
        <fullName evidence="1">Ribosomal protein L11 methyltransferase</fullName>
        <shortName evidence="1">L11 Mtase</shortName>
        <ecNumber evidence="1">2.1.1.-</ecNumber>
    </recommendedName>
</protein>
<accession>Q3BY72</accession>
<proteinExistence type="inferred from homology"/>
<reference key="1">
    <citation type="journal article" date="2005" name="J. Bacteriol.">
        <title>Insights into genome plasticity and pathogenicity of the plant pathogenic Bacterium Xanthomonas campestris pv. vesicatoria revealed by the complete genome sequence.</title>
        <authorList>
            <person name="Thieme F."/>
            <person name="Koebnik R."/>
            <person name="Bekel T."/>
            <person name="Berger C."/>
            <person name="Boch J."/>
            <person name="Buettner D."/>
            <person name="Caldana C."/>
            <person name="Gaigalat L."/>
            <person name="Goesmann A."/>
            <person name="Kay S."/>
            <person name="Kirchner O."/>
            <person name="Lanz C."/>
            <person name="Linke B."/>
            <person name="McHardy A.C."/>
            <person name="Meyer F."/>
            <person name="Mittenhuber G."/>
            <person name="Nies D.H."/>
            <person name="Niesbach-Kloesgen U."/>
            <person name="Patschkowski T."/>
            <person name="Rueckert C."/>
            <person name="Rupp O."/>
            <person name="Schneiker S."/>
            <person name="Schuster S.C."/>
            <person name="Vorhoelter F.J."/>
            <person name="Weber E."/>
            <person name="Puehler A."/>
            <person name="Bonas U."/>
            <person name="Bartels D."/>
            <person name="Kaiser O."/>
        </authorList>
    </citation>
    <scope>NUCLEOTIDE SEQUENCE [LARGE SCALE GENOMIC DNA]</scope>
    <source>
        <strain>85-10</strain>
    </source>
</reference>
<dbReference type="EC" id="2.1.1.-" evidence="1"/>
<dbReference type="EMBL" id="AM039952">
    <property type="protein sequence ID" value="CAJ22191.1"/>
    <property type="molecule type" value="Genomic_DNA"/>
</dbReference>
<dbReference type="RefSeq" id="WP_011346205.1">
    <property type="nucleotide sequence ID" value="NZ_CP017190.1"/>
</dbReference>
<dbReference type="SMR" id="Q3BY72"/>
<dbReference type="STRING" id="456327.BJD11_20055"/>
<dbReference type="KEGG" id="xcv:XCV0560"/>
<dbReference type="eggNOG" id="COG2264">
    <property type="taxonomic scope" value="Bacteria"/>
</dbReference>
<dbReference type="HOGENOM" id="CLU_049382_4_1_6"/>
<dbReference type="Proteomes" id="UP000007069">
    <property type="component" value="Chromosome"/>
</dbReference>
<dbReference type="GO" id="GO:0005829">
    <property type="term" value="C:cytosol"/>
    <property type="evidence" value="ECO:0007669"/>
    <property type="project" value="TreeGrafter"/>
</dbReference>
<dbReference type="GO" id="GO:0016279">
    <property type="term" value="F:protein-lysine N-methyltransferase activity"/>
    <property type="evidence" value="ECO:0007669"/>
    <property type="project" value="TreeGrafter"/>
</dbReference>
<dbReference type="GO" id="GO:0032259">
    <property type="term" value="P:methylation"/>
    <property type="evidence" value="ECO:0007669"/>
    <property type="project" value="UniProtKB-KW"/>
</dbReference>
<dbReference type="CDD" id="cd02440">
    <property type="entry name" value="AdoMet_MTases"/>
    <property type="match status" value="1"/>
</dbReference>
<dbReference type="Gene3D" id="3.40.50.150">
    <property type="entry name" value="Vaccinia Virus protein VP39"/>
    <property type="match status" value="1"/>
</dbReference>
<dbReference type="HAMAP" id="MF_00735">
    <property type="entry name" value="Methyltr_PrmA"/>
    <property type="match status" value="1"/>
</dbReference>
<dbReference type="InterPro" id="IPR050078">
    <property type="entry name" value="Ribosomal_L11_MeTrfase_PrmA"/>
</dbReference>
<dbReference type="InterPro" id="IPR004498">
    <property type="entry name" value="Ribosomal_PrmA_MeTrfase"/>
</dbReference>
<dbReference type="InterPro" id="IPR029063">
    <property type="entry name" value="SAM-dependent_MTases_sf"/>
</dbReference>
<dbReference type="NCBIfam" id="TIGR00406">
    <property type="entry name" value="prmA"/>
    <property type="match status" value="1"/>
</dbReference>
<dbReference type="PANTHER" id="PTHR43648">
    <property type="entry name" value="ELECTRON TRANSFER FLAVOPROTEIN BETA SUBUNIT LYSINE METHYLTRANSFERASE"/>
    <property type="match status" value="1"/>
</dbReference>
<dbReference type="PANTHER" id="PTHR43648:SF1">
    <property type="entry name" value="ELECTRON TRANSFER FLAVOPROTEIN BETA SUBUNIT LYSINE METHYLTRANSFERASE"/>
    <property type="match status" value="1"/>
</dbReference>
<dbReference type="Pfam" id="PF06325">
    <property type="entry name" value="PrmA"/>
    <property type="match status" value="1"/>
</dbReference>
<dbReference type="PIRSF" id="PIRSF000401">
    <property type="entry name" value="RPL11_MTase"/>
    <property type="match status" value="1"/>
</dbReference>
<dbReference type="SUPFAM" id="SSF53335">
    <property type="entry name" value="S-adenosyl-L-methionine-dependent methyltransferases"/>
    <property type="match status" value="1"/>
</dbReference>
<comment type="function">
    <text evidence="1">Methylates ribosomal protein L11.</text>
</comment>
<comment type="catalytic activity">
    <reaction evidence="1">
        <text>L-lysyl-[protein] + 3 S-adenosyl-L-methionine = N(6),N(6),N(6)-trimethyl-L-lysyl-[protein] + 3 S-adenosyl-L-homocysteine + 3 H(+)</text>
        <dbReference type="Rhea" id="RHEA:54192"/>
        <dbReference type="Rhea" id="RHEA-COMP:9752"/>
        <dbReference type="Rhea" id="RHEA-COMP:13826"/>
        <dbReference type="ChEBI" id="CHEBI:15378"/>
        <dbReference type="ChEBI" id="CHEBI:29969"/>
        <dbReference type="ChEBI" id="CHEBI:57856"/>
        <dbReference type="ChEBI" id="CHEBI:59789"/>
        <dbReference type="ChEBI" id="CHEBI:61961"/>
    </reaction>
</comment>
<comment type="subcellular location">
    <subcellularLocation>
        <location evidence="1">Cytoplasm</location>
    </subcellularLocation>
</comment>
<comment type="similarity">
    <text evidence="1">Belongs to the methyltransferase superfamily. PrmA family.</text>
</comment>
<organism>
    <name type="scientific">Xanthomonas euvesicatoria pv. vesicatoria (strain 85-10)</name>
    <name type="common">Xanthomonas campestris pv. vesicatoria</name>
    <dbReference type="NCBI Taxonomy" id="316273"/>
    <lineage>
        <taxon>Bacteria</taxon>
        <taxon>Pseudomonadati</taxon>
        <taxon>Pseudomonadota</taxon>
        <taxon>Gammaproteobacteria</taxon>
        <taxon>Lysobacterales</taxon>
        <taxon>Lysobacteraceae</taxon>
        <taxon>Xanthomonas</taxon>
    </lineage>
</organism>
<name>PRMA_XANE5</name>
<evidence type="ECO:0000255" key="1">
    <source>
        <dbReference type="HAMAP-Rule" id="MF_00735"/>
    </source>
</evidence>
<gene>
    <name evidence="1" type="primary">prmA</name>
    <name type="ordered locus">XCV0560</name>
</gene>